<reference evidence="7" key="1">
    <citation type="journal article" date="2005" name="J. Biol. Chem.">
        <title>A family of acetylcholine-gated chloride channel subunits in Caenorhabditis elegans.</title>
        <authorList>
            <person name="Putrenko I."/>
            <person name="Zakikhani M."/>
            <person name="Dent J.A."/>
        </authorList>
    </citation>
    <scope>NUCLEOTIDE SEQUENCE [MRNA]</scope>
    <scope>FUNCTION</scope>
    <scope>SUBUNIT</scope>
    <scope>SUBCELLULAR LOCATION</scope>
</reference>
<reference evidence="8" key="2">
    <citation type="journal article" date="1998" name="Science">
        <title>Genome sequence of the nematode C. elegans: a platform for investigating biology.</title>
        <authorList>
            <consortium name="The C. elegans sequencing consortium"/>
        </authorList>
    </citation>
    <scope>NUCLEOTIDE SEQUENCE [LARGE SCALE GENOMIC DNA]</scope>
    <source>
        <strain evidence="8">Bristol N2</strain>
    </source>
</reference>
<reference evidence="7" key="3">
    <citation type="journal article" date="2015" name="Elife">
        <title>A cellular and regulatory map of the cholinergic nervous system of C. elegans.</title>
        <authorList>
            <person name="Pereira L."/>
            <person name="Kratsios P."/>
            <person name="Serrano-Saiz E."/>
            <person name="Sheftel H."/>
            <person name="Mayo A.E."/>
            <person name="Hall D.H."/>
            <person name="White J.G."/>
            <person name="LeBoeuf B."/>
            <person name="Garcia L.R."/>
            <person name="Alon U."/>
            <person name="Hobert O."/>
        </authorList>
    </citation>
    <scope>TISSUE SPECIFICITY</scope>
</reference>
<reference evidence="7" key="4">
    <citation type="journal article" date="2016" name="Elife">
        <title>Release-dependent feedback inhibition by a presynaptically localized ligand-gated anion channel.</title>
        <authorList>
            <person name="Takayanagi-Kiya S."/>
            <person name="Zhou K."/>
            <person name="Jin Y."/>
        </authorList>
    </citation>
    <scope>DISRUPTION PHENOTYPE</scope>
</reference>
<sequence>MIFTLLSTLPVLIITTELDYSELVHSAELVSSSSYIHHKTNKKPDNCTRDTDIIDRLLNGTGYNKFRIPQEEGMTVVVEIWIQAITSIDELTNDFDMDIYITETWLDPALNFQTMTPCKGNLSLNHQVLDRLWTPNSCFINSKVAQIHNSPFRSVFLMLFPNGTVMVNYRVRVKGPCSLDLSNFPLDLQKCSLIYESFNYNRQEVEMRWSDAEHPVFNLSKIMLPDFDLFEIQTERRQEPYPAGMWDELHVTIIFERRFIWYFMQAYLPTYLTIFISWISFSLGSRAIPARTMLGVNSLLAIVFSFGNIMRNLPRVSYIKGIDVWMLVSMTFIFCSLLELAIVGFMVRDETVAKKKQQKKISGNISREESPHGIISERRFMFPPGCSESSKSLSSCTSGWTPERIDSISSVMFPFSFFVFNIIYWFYYIHRKEIIKQNLINRVDG</sequence>
<evidence type="ECO:0000250" key="1">
    <source>
        <dbReference type="UniProtKB" id="P02712"/>
    </source>
</evidence>
<evidence type="ECO:0000255" key="2"/>
<evidence type="ECO:0000255" key="3">
    <source>
        <dbReference type="PROSITE-ProRule" id="PRU00498"/>
    </source>
</evidence>
<evidence type="ECO:0000269" key="4">
    <source>
    </source>
</evidence>
<evidence type="ECO:0000269" key="5">
    <source>
    </source>
</evidence>
<evidence type="ECO:0000269" key="6">
    <source>
    </source>
</evidence>
<evidence type="ECO:0000305" key="7"/>
<evidence type="ECO:0000312" key="8">
    <source>
        <dbReference type="Proteomes" id="UP000001940"/>
    </source>
</evidence>
<evidence type="ECO:0000312" key="9">
    <source>
        <dbReference type="WormBase" id="C53D6.3"/>
    </source>
</evidence>
<gene>
    <name evidence="9" type="primary">acc-2</name>
    <name evidence="9" type="ORF">C53D6.3</name>
</gene>
<accession>Q18812</accession>
<dbReference type="EMBL" id="BX284604">
    <property type="protein sequence ID" value="CAA94228.1"/>
    <property type="molecule type" value="Genomic_DNA"/>
</dbReference>
<dbReference type="PIR" id="T20190">
    <property type="entry name" value="T20190"/>
</dbReference>
<dbReference type="RefSeq" id="NP_501567.1">
    <property type="nucleotide sequence ID" value="NM_069166.3"/>
</dbReference>
<dbReference type="SMR" id="Q18812"/>
<dbReference type="FunCoup" id="Q18812">
    <property type="interactions" value="70"/>
</dbReference>
<dbReference type="STRING" id="6239.C53D6.3.1"/>
<dbReference type="GlyCosmos" id="Q18812">
    <property type="glycosylation" value="5 sites, No reported glycans"/>
</dbReference>
<dbReference type="PaxDb" id="6239-C53D6.3"/>
<dbReference type="EnsemblMetazoa" id="C53D6.3.1">
    <property type="protein sequence ID" value="C53D6.3.1"/>
    <property type="gene ID" value="WBGene00008280"/>
</dbReference>
<dbReference type="GeneID" id="183758"/>
<dbReference type="KEGG" id="cel:CELE_C53D6.3"/>
<dbReference type="UCSC" id="C53D6.3">
    <property type="organism name" value="c. elegans"/>
</dbReference>
<dbReference type="AGR" id="WB:WBGene00008280"/>
<dbReference type="CTD" id="183758"/>
<dbReference type="WormBase" id="C53D6.3">
    <property type="protein sequence ID" value="CE05488"/>
    <property type="gene ID" value="WBGene00008280"/>
    <property type="gene designation" value="acc-2"/>
</dbReference>
<dbReference type="eggNOG" id="KOG3644">
    <property type="taxonomic scope" value="Eukaryota"/>
</dbReference>
<dbReference type="HOGENOM" id="CLU_010920_1_3_1"/>
<dbReference type="InParanoid" id="Q18812"/>
<dbReference type="OMA" id="IYITETW"/>
<dbReference type="OrthoDB" id="442503at2759"/>
<dbReference type="PhylomeDB" id="Q18812"/>
<dbReference type="Reactome" id="R-CEL-112314">
    <property type="pathway name" value="Neurotransmitter receptors and postsynaptic signal transmission"/>
</dbReference>
<dbReference type="PRO" id="PR:Q18812"/>
<dbReference type="Proteomes" id="UP000001940">
    <property type="component" value="Chromosome IV"/>
</dbReference>
<dbReference type="GO" id="GO:0034707">
    <property type="term" value="C:chloride channel complex"/>
    <property type="evidence" value="ECO:0007669"/>
    <property type="project" value="UniProtKB-KW"/>
</dbReference>
<dbReference type="GO" id="GO:0005886">
    <property type="term" value="C:plasma membrane"/>
    <property type="evidence" value="ECO:0007669"/>
    <property type="project" value="UniProtKB-SubCell"/>
</dbReference>
<dbReference type="GO" id="GO:0005254">
    <property type="term" value="F:chloride channel activity"/>
    <property type="evidence" value="ECO:0007669"/>
    <property type="project" value="UniProtKB-KW"/>
</dbReference>
<dbReference type="GO" id="GO:0005230">
    <property type="term" value="F:extracellular ligand-gated monoatomic ion channel activity"/>
    <property type="evidence" value="ECO:0007669"/>
    <property type="project" value="InterPro"/>
</dbReference>
<dbReference type="GO" id="GO:0004888">
    <property type="term" value="F:transmembrane signaling receptor activity"/>
    <property type="evidence" value="ECO:0007669"/>
    <property type="project" value="InterPro"/>
</dbReference>
<dbReference type="GO" id="GO:1902476">
    <property type="term" value="P:chloride transmembrane transport"/>
    <property type="evidence" value="ECO:0000318"/>
    <property type="project" value="GO_Central"/>
</dbReference>
<dbReference type="CDD" id="cd18990">
    <property type="entry name" value="LGIC_ECD_GABAAR"/>
    <property type="match status" value="1"/>
</dbReference>
<dbReference type="CDD" id="cd19049">
    <property type="entry name" value="LGIC_TM_anion"/>
    <property type="match status" value="1"/>
</dbReference>
<dbReference type="FunFam" id="2.70.170.10:FF:000049">
    <property type="entry name" value="Ligand-Gated ion Channel"/>
    <property type="match status" value="1"/>
</dbReference>
<dbReference type="Gene3D" id="2.70.170.10">
    <property type="entry name" value="Neurotransmitter-gated ion-channel ligand-binding domain"/>
    <property type="match status" value="1"/>
</dbReference>
<dbReference type="Gene3D" id="1.20.58.390">
    <property type="entry name" value="Neurotransmitter-gated ion-channel transmembrane domain"/>
    <property type="match status" value="1"/>
</dbReference>
<dbReference type="InterPro" id="IPR006028">
    <property type="entry name" value="GABAA/Glycine_rcpt"/>
</dbReference>
<dbReference type="InterPro" id="IPR006202">
    <property type="entry name" value="Neur_chan_lig-bd"/>
</dbReference>
<dbReference type="InterPro" id="IPR036734">
    <property type="entry name" value="Neur_chan_lig-bd_sf"/>
</dbReference>
<dbReference type="InterPro" id="IPR006201">
    <property type="entry name" value="Neur_channel"/>
</dbReference>
<dbReference type="InterPro" id="IPR036719">
    <property type="entry name" value="Neuro-gated_channel_TM_sf"/>
</dbReference>
<dbReference type="InterPro" id="IPR038050">
    <property type="entry name" value="Neuro_actylchol_rec"/>
</dbReference>
<dbReference type="InterPro" id="IPR006029">
    <property type="entry name" value="Neurotrans-gated_channel_TM"/>
</dbReference>
<dbReference type="InterPro" id="IPR018000">
    <property type="entry name" value="Neurotransmitter_ion_chnl_CS"/>
</dbReference>
<dbReference type="PANTHER" id="PTHR18945">
    <property type="entry name" value="NEUROTRANSMITTER GATED ION CHANNEL"/>
    <property type="match status" value="1"/>
</dbReference>
<dbReference type="Pfam" id="PF02931">
    <property type="entry name" value="Neur_chan_LBD"/>
    <property type="match status" value="1"/>
</dbReference>
<dbReference type="Pfam" id="PF02932">
    <property type="entry name" value="Neur_chan_memb"/>
    <property type="match status" value="1"/>
</dbReference>
<dbReference type="PRINTS" id="PR00253">
    <property type="entry name" value="GABAARECEPTR"/>
</dbReference>
<dbReference type="PRINTS" id="PR00252">
    <property type="entry name" value="NRIONCHANNEL"/>
</dbReference>
<dbReference type="SUPFAM" id="SSF90112">
    <property type="entry name" value="Neurotransmitter-gated ion-channel transmembrane pore"/>
    <property type="match status" value="1"/>
</dbReference>
<dbReference type="SUPFAM" id="SSF63712">
    <property type="entry name" value="Nicotinic receptor ligand binding domain-like"/>
    <property type="match status" value="1"/>
</dbReference>
<dbReference type="PROSITE" id="PS00236">
    <property type="entry name" value="NEUROTR_ION_CHANNEL"/>
    <property type="match status" value="1"/>
</dbReference>
<organism evidence="8">
    <name type="scientific">Caenorhabditis elegans</name>
    <dbReference type="NCBI Taxonomy" id="6239"/>
    <lineage>
        <taxon>Eukaryota</taxon>
        <taxon>Metazoa</taxon>
        <taxon>Ecdysozoa</taxon>
        <taxon>Nematoda</taxon>
        <taxon>Chromadorea</taxon>
        <taxon>Rhabditida</taxon>
        <taxon>Rhabditina</taxon>
        <taxon>Rhabditomorpha</taxon>
        <taxon>Rhabditoidea</taxon>
        <taxon>Rhabditidae</taxon>
        <taxon>Peloderinae</taxon>
        <taxon>Caenorhabditis</taxon>
    </lineage>
</organism>
<comment type="function">
    <text evidence="4">Acetylcholine-gated chloride channel subunit. Currents in channels are triggered in response to acetylcholine. Channel properties may be modulated by the formation of homomeric and heteromeric channels.</text>
</comment>
<comment type="subunit">
    <text evidence="4">Homopentamer (in vitro). May interact with either acc-3 or acc-4; the interactions do not result in significant heteropentameric ion channel activity.</text>
</comment>
<comment type="subcellular location">
    <subcellularLocation>
        <location evidence="4">Cell membrane</location>
        <topology evidence="2">Multi-pass membrane protein</topology>
    </subcellularLocation>
</comment>
<comment type="tissue specificity">
    <text evidence="5">Expressed in RIA, RIG, PHA and AIZ glutamatergic neurons, URX and RIH cholinergic neurons, and in male-specific MCM neurons.</text>
</comment>
<comment type="disruption phenotype">
    <text evidence="6">Grossly normal movement.</text>
</comment>
<comment type="similarity">
    <text evidence="7">Belongs to the ligand-gated ion channel (TC 1.A.9) family.</text>
</comment>
<feature type="signal peptide" evidence="2">
    <location>
        <begin position="1"/>
        <end position="26"/>
    </location>
</feature>
<feature type="chain" id="PRO_5004186831" description="Acetylcholine-gated chloride channel subunit acc-2" evidence="7">
    <location>
        <begin position="27"/>
        <end position="445"/>
    </location>
</feature>
<feature type="topological domain" description="Extracellular" evidence="7">
    <location>
        <begin position="27"/>
        <end position="258"/>
    </location>
</feature>
<feature type="transmembrane region" description="Helical" evidence="2">
    <location>
        <begin position="259"/>
        <end position="279"/>
    </location>
</feature>
<feature type="topological domain" description="Cytoplasmic" evidence="7">
    <location>
        <begin position="280"/>
        <end position="286"/>
    </location>
</feature>
<feature type="transmembrane region" description="Helical" evidence="2">
    <location>
        <begin position="287"/>
        <end position="307"/>
    </location>
</feature>
<feature type="topological domain" description="Extracellular" evidence="7">
    <location>
        <begin position="308"/>
        <end position="326"/>
    </location>
</feature>
<feature type="transmembrane region" description="Helical" evidence="2">
    <location>
        <begin position="327"/>
        <end position="347"/>
    </location>
</feature>
<feature type="topological domain" description="Cytoplasmic" evidence="7">
    <location>
        <begin position="348"/>
        <end position="407"/>
    </location>
</feature>
<feature type="transmembrane region" description="Helical" evidence="2">
    <location>
        <begin position="408"/>
        <end position="428"/>
    </location>
</feature>
<feature type="topological domain" description="Extracellular" evidence="7">
    <location>
        <begin position="429"/>
        <end position="445"/>
    </location>
</feature>
<feature type="glycosylation site" description="N-linked (GlcNAc...) asparagine" evidence="3">
    <location>
        <position position="46"/>
    </location>
</feature>
<feature type="glycosylation site" description="N-linked (GlcNAc...) asparagine" evidence="3">
    <location>
        <position position="59"/>
    </location>
</feature>
<feature type="glycosylation site" description="N-linked (GlcNAc...) asparagine" evidence="3">
    <location>
        <position position="121"/>
    </location>
</feature>
<feature type="glycosylation site" description="N-linked (GlcNAc...) asparagine" evidence="3">
    <location>
        <position position="162"/>
    </location>
</feature>
<feature type="glycosylation site" description="N-linked (GlcNAc...) asparagine" evidence="3">
    <location>
        <position position="218"/>
    </location>
</feature>
<feature type="disulfide bond" evidence="1">
    <location>
        <begin position="177"/>
        <end position="191"/>
    </location>
</feature>
<protein>
    <recommendedName>
        <fullName evidence="7">Acetylcholine-gated chloride channel subunit acc-2</fullName>
    </recommendedName>
</protein>
<proteinExistence type="evidence at protein level"/>
<name>ACC2_CAEEL</name>
<keyword id="KW-1003">Cell membrane</keyword>
<keyword id="KW-0868">Chloride</keyword>
<keyword id="KW-0869">Chloride channel</keyword>
<keyword id="KW-1015">Disulfide bond</keyword>
<keyword id="KW-0325">Glycoprotein</keyword>
<keyword id="KW-0407">Ion channel</keyword>
<keyword id="KW-0406">Ion transport</keyword>
<keyword id="KW-1071">Ligand-gated ion channel</keyword>
<keyword id="KW-0472">Membrane</keyword>
<keyword id="KW-1185">Reference proteome</keyword>
<keyword id="KW-0732">Signal</keyword>
<keyword id="KW-0812">Transmembrane</keyword>
<keyword id="KW-1133">Transmembrane helix</keyword>
<keyword id="KW-0813">Transport</keyword>